<feature type="chain" id="PRO_1000019646" description="Serine--tRNA ligase">
    <location>
        <begin position="1"/>
        <end position="424"/>
    </location>
</feature>
<feature type="binding site" evidence="1">
    <location>
        <begin position="230"/>
        <end position="232"/>
    </location>
    <ligand>
        <name>L-serine</name>
        <dbReference type="ChEBI" id="CHEBI:33384"/>
    </ligand>
</feature>
<feature type="binding site" evidence="1">
    <location>
        <begin position="261"/>
        <end position="263"/>
    </location>
    <ligand>
        <name>ATP</name>
        <dbReference type="ChEBI" id="CHEBI:30616"/>
    </ligand>
</feature>
<feature type="binding site" evidence="1">
    <location>
        <position position="284"/>
    </location>
    <ligand>
        <name>L-serine</name>
        <dbReference type="ChEBI" id="CHEBI:33384"/>
    </ligand>
</feature>
<feature type="binding site" evidence="1">
    <location>
        <begin position="348"/>
        <end position="351"/>
    </location>
    <ligand>
        <name>ATP</name>
        <dbReference type="ChEBI" id="CHEBI:30616"/>
    </ligand>
</feature>
<feature type="binding site" evidence="1">
    <location>
        <position position="384"/>
    </location>
    <ligand>
        <name>L-serine</name>
        <dbReference type="ChEBI" id="CHEBI:33384"/>
    </ligand>
</feature>
<sequence>MLDIKKVRQNPEIVVEALKKRGANLNLDEFLRLDEERRKLLVDVEQKKYKRNTVSEEIGRLKKQGLPADDLILEMRALSDEIKKLDDEVAQIEEKLHAILLTIPNIPHESVPVGKDSSENVEVRRWGEPRKFTFTPKAHWEIGEELDILDFARGSKVTGARFTFYKGLGAMLERAVINFMLDLHTREHGYVEVFPPFIVNADSMMGTGQLPKFAEDMFKLEGLNYYLIPTAEVPVTNLYREEILDGDKLPIYHCAYSACFRAEAGAAGRDTRGLIRQHQFNKVELVKFVKPENSYEELEKLTRDAERVLQLLGLPYRVVVLCTGDLGFSAAKTYDIEVWLPSYNDYKEISSCSNFEDFQARRAKIRYKEHPKAKPEFVHTLNGSGLAVGRTVAAILENYQNEDGSVTVPEVLRPYMGVDRIYKK</sequence>
<dbReference type="EC" id="6.1.1.11" evidence="1"/>
<dbReference type="EMBL" id="CP000141">
    <property type="protein sequence ID" value="ABB14707.1"/>
    <property type="molecule type" value="Genomic_DNA"/>
</dbReference>
<dbReference type="RefSeq" id="WP_011345550.1">
    <property type="nucleotide sequence ID" value="NC_007503.1"/>
</dbReference>
<dbReference type="SMR" id="Q3A8Q5"/>
<dbReference type="FunCoup" id="Q3A8Q5">
    <property type="interactions" value="444"/>
</dbReference>
<dbReference type="STRING" id="246194.CHY_2697"/>
<dbReference type="KEGG" id="chy:CHY_2697"/>
<dbReference type="eggNOG" id="COG0172">
    <property type="taxonomic scope" value="Bacteria"/>
</dbReference>
<dbReference type="HOGENOM" id="CLU_023797_1_1_9"/>
<dbReference type="InParanoid" id="Q3A8Q5"/>
<dbReference type="OrthoDB" id="9804647at2"/>
<dbReference type="UniPathway" id="UPA00906">
    <property type="reaction ID" value="UER00895"/>
</dbReference>
<dbReference type="Proteomes" id="UP000002706">
    <property type="component" value="Chromosome"/>
</dbReference>
<dbReference type="GO" id="GO:0005737">
    <property type="term" value="C:cytoplasm"/>
    <property type="evidence" value="ECO:0007669"/>
    <property type="project" value="UniProtKB-SubCell"/>
</dbReference>
<dbReference type="GO" id="GO:0005524">
    <property type="term" value="F:ATP binding"/>
    <property type="evidence" value="ECO:0007669"/>
    <property type="project" value="UniProtKB-UniRule"/>
</dbReference>
<dbReference type="GO" id="GO:0140096">
    <property type="term" value="F:catalytic activity, acting on a protein"/>
    <property type="evidence" value="ECO:0007669"/>
    <property type="project" value="UniProtKB-ARBA"/>
</dbReference>
<dbReference type="GO" id="GO:0004828">
    <property type="term" value="F:serine-tRNA ligase activity"/>
    <property type="evidence" value="ECO:0007669"/>
    <property type="project" value="UniProtKB-UniRule"/>
</dbReference>
<dbReference type="GO" id="GO:0016740">
    <property type="term" value="F:transferase activity"/>
    <property type="evidence" value="ECO:0007669"/>
    <property type="project" value="UniProtKB-ARBA"/>
</dbReference>
<dbReference type="GO" id="GO:0016260">
    <property type="term" value="P:selenocysteine biosynthetic process"/>
    <property type="evidence" value="ECO:0007669"/>
    <property type="project" value="UniProtKB-UniRule"/>
</dbReference>
<dbReference type="GO" id="GO:0006434">
    <property type="term" value="P:seryl-tRNA aminoacylation"/>
    <property type="evidence" value="ECO:0007669"/>
    <property type="project" value="UniProtKB-UniRule"/>
</dbReference>
<dbReference type="CDD" id="cd00770">
    <property type="entry name" value="SerRS_core"/>
    <property type="match status" value="1"/>
</dbReference>
<dbReference type="Gene3D" id="3.30.930.10">
    <property type="entry name" value="Bira Bifunctional Protein, Domain 2"/>
    <property type="match status" value="1"/>
</dbReference>
<dbReference type="Gene3D" id="1.10.287.40">
    <property type="entry name" value="Serine-tRNA synthetase, tRNA binding domain"/>
    <property type="match status" value="1"/>
</dbReference>
<dbReference type="HAMAP" id="MF_00176">
    <property type="entry name" value="Ser_tRNA_synth_type1"/>
    <property type="match status" value="1"/>
</dbReference>
<dbReference type="InterPro" id="IPR002314">
    <property type="entry name" value="aa-tRNA-synt_IIb"/>
</dbReference>
<dbReference type="InterPro" id="IPR006195">
    <property type="entry name" value="aa-tRNA-synth_II"/>
</dbReference>
<dbReference type="InterPro" id="IPR045864">
    <property type="entry name" value="aa-tRNA-synth_II/BPL/LPL"/>
</dbReference>
<dbReference type="InterPro" id="IPR002317">
    <property type="entry name" value="Ser-tRNA-ligase_type_1"/>
</dbReference>
<dbReference type="InterPro" id="IPR015866">
    <property type="entry name" value="Ser-tRNA-synth_1_N"/>
</dbReference>
<dbReference type="InterPro" id="IPR042103">
    <property type="entry name" value="SerRS_1_N_sf"/>
</dbReference>
<dbReference type="InterPro" id="IPR033729">
    <property type="entry name" value="SerRS_core"/>
</dbReference>
<dbReference type="InterPro" id="IPR010978">
    <property type="entry name" value="tRNA-bd_arm"/>
</dbReference>
<dbReference type="NCBIfam" id="TIGR00414">
    <property type="entry name" value="serS"/>
    <property type="match status" value="1"/>
</dbReference>
<dbReference type="PANTHER" id="PTHR43697:SF1">
    <property type="entry name" value="SERINE--TRNA LIGASE"/>
    <property type="match status" value="1"/>
</dbReference>
<dbReference type="PANTHER" id="PTHR43697">
    <property type="entry name" value="SERYL-TRNA SYNTHETASE"/>
    <property type="match status" value="1"/>
</dbReference>
<dbReference type="Pfam" id="PF02403">
    <property type="entry name" value="Seryl_tRNA_N"/>
    <property type="match status" value="1"/>
</dbReference>
<dbReference type="Pfam" id="PF00587">
    <property type="entry name" value="tRNA-synt_2b"/>
    <property type="match status" value="1"/>
</dbReference>
<dbReference type="PIRSF" id="PIRSF001529">
    <property type="entry name" value="Ser-tRNA-synth_IIa"/>
    <property type="match status" value="1"/>
</dbReference>
<dbReference type="PRINTS" id="PR00981">
    <property type="entry name" value="TRNASYNTHSER"/>
</dbReference>
<dbReference type="SUPFAM" id="SSF55681">
    <property type="entry name" value="Class II aaRS and biotin synthetases"/>
    <property type="match status" value="1"/>
</dbReference>
<dbReference type="SUPFAM" id="SSF46589">
    <property type="entry name" value="tRNA-binding arm"/>
    <property type="match status" value="1"/>
</dbReference>
<dbReference type="PROSITE" id="PS50862">
    <property type="entry name" value="AA_TRNA_LIGASE_II"/>
    <property type="match status" value="1"/>
</dbReference>
<reference key="1">
    <citation type="journal article" date="2005" name="PLoS Genet.">
        <title>Life in hot carbon monoxide: the complete genome sequence of Carboxydothermus hydrogenoformans Z-2901.</title>
        <authorList>
            <person name="Wu M."/>
            <person name="Ren Q."/>
            <person name="Durkin A.S."/>
            <person name="Daugherty S.C."/>
            <person name="Brinkac L.M."/>
            <person name="Dodson R.J."/>
            <person name="Madupu R."/>
            <person name="Sullivan S.A."/>
            <person name="Kolonay J.F."/>
            <person name="Nelson W.C."/>
            <person name="Tallon L.J."/>
            <person name="Jones K.M."/>
            <person name="Ulrich L.E."/>
            <person name="Gonzalez J.M."/>
            <person name="Zhulin I.B."/>
            <person name="Robb F.T."/>
            <person name="Eisen J.A."/>
        </authorList>
    </citation>
    <scope>NUCLEOTIDE SEQUENCE [LARGE SCALE GENOMIC DNA]</scope>
    <source>
        <strain>ATCC BAA-161 / DSM 6008 / Z-2901</strain>
    </source>
</reference>
<keyword id="KW-0030">Aminoacyl-tRNA synthetase</keyword>
<keyword id="KW-0067">ATP-binding</keyword>
<keyword id="KW-0963">Cytoplasm</keyword>
<keyword id="KW-0436">Ligase</keyword>
<keyword id="KW-0547">Nucleotide-binding</keyword>
<keyword id="KW-0648">Protein biosynthesis</keyword>
<keyword id="KW-1185">Reference proteome</keyword>
<protein>
    <recommendedName>
        <fullName evidence="1">Serine--tRNA ligase</fullName>
        <ecNumber evidence="1">6.1.1.11</ecNumber>
    </recommendedName>
    <alternativeName>
        <fullName evidence="1">Seryl-tRNA synthetase</fullName>
        <shortName evidence="1">SerRS</shortName>
    </alternativeName>
    <alternativeName>
        <fullName evidence="1">Seryl-tRNA(Ser/Sec) synthetase</fullName>
    </alternativeName>
</protein>
<organism>
    <name type="scientific">Carboxydothermus hydrogenoformans (strain ATCC BAA-161 / DSM 6008 / Z-2901)</name>
    <dbReference type="NCBI Taxonomy" id="246194"/>
    <lineage>
        <taxon>Bacteria</taxon>
        <taxon>Bacillati</taxon>
        <taxon>Bacillota</taxon>
        <taxon>Clostridia</taxon>
        <taxon>Thermoanaerobacterales</taxon>
        <taxon>Thermoanaerobacteraceae</taxon>
        <taxon>Carboxydothermus</taxon>
    </lineage>
</organism>
<comment type="function">
    <text evidence="1">Catalyzes the attachment of serine to tRNA(Ser). Is also able to aminoacylate tRNA(Sec) with serine, to form the misacylated tRNA L-seryl-tRNA(Sec), which will be further converted into selenocysteinyl-tRNA(Sec).</text>
</comment>
<comment type="catalytic activity">
    <reaction evidence="1">
        <text>tRNA(Ser) + L-serine + ATP = L-seryl-tRNA(Ser) + AMP + diphosphate + H(+)</text>
        <dbReference type="Rhea" id="RHEA:12292"/>
        <dbReference type="Rhea" id="RHEA-COMP:9669"/>
        <dbReference type="Rhea" id="RHEA-COMP:9703"/>
        <dbReference type="ChEBI" id="CHEBI:15378"/>
        <dbReference type="ChEBI" id="CHEBI:30616"/>
        <dbReference type="ChEBI" id="CHEBI:33019"/>
        <dbReference type="ChEBI" id="CHEBI:33384"/>
        <dbReference type="ChEBI" id="CHEBI:78442"/>
        <dbReference type="ChEBI" id="CHEBI:78533"/>
        <dbReference type="ChEBI" id="CHEBI:456215"/>
        <dbReference type="EC" id="6.1.1.11"/>
    </reaction>
</comment>
<comment type="catalytic activity">
    <reaction evidence="1">
        <text>tRNA(Sec) + L-serine + ATP = L-seryl-tRNA(Sec) + AMP + diphosphate + H(+)</text>
        <dbReference type="Rhea" id="RHEA:42580"/>
        <dbReference type="Rhea" id="RHEA-COMP:9742"/>
        <dbReference type="Rhea" id="RHEA-COMP:10128"/>
        <dbReference type="ChEBI" id="CHEBI:15378"/>
        <dbReference type="ChEBI" id="CHEBI:30616"/>
        <dbReference type="ChEBI" id="CHEBI:33019"/>
        <dbReference type="ChEBI" id="CHEBI:33384"/>
        <dbReference type="ChEBI" id="CHEBI:78442"/>
        <dbReference type="ChEBI" id="CHEBI:78533"/>
        <dbReference type="ChEBI" id="CHEBI:456215"/>
        <dbReference type="EC" id="6.1.1.11"/>
    </reaction>
</comment>
<comment type="pathway">
    <text evidence="1">Aminoacyl-tRNA biosynthesis; selenocysteinyl-tRNA(Sec) biosynthesis; L-seryl-tRNA(Sec) from L-serine and tRNA(Sec): step 1/1.</text>
</comment>
<comment type="subunit">
    <text evidence="1">Homodimer. The tRNA molecule binds across the dimer.</text>
</comment>
<comment type="subcellular location">
    <subcellularLocation>
        <location evidence="1">Cytoplasm</location>
    </subcellularLocation>
</comment>
<comment type="domain">
    <text evidence="1">Consists of two distinct domains, a catalytic core and a N-terminal extension that is involved in tRNA binding.</text>
</comment>
<comment type="similarity">
    <text evidence="1">Belongs to the class-II aminoacyl-tRNA synthetase family. Type-1 seryl-tRNA synthetase subfamily.</text>
</comment>
<evidence type="ECO:0000255" key="1">
    <source>
        <dbReference type="HAMAP-Rule" id="MF_00176"/>
    </source>
</evidence>
<gene>
    <name evidence="1" type="primary">serS</name>
    <name type="ordered locus">CHY_2697</name>
</gene>
<name>SYS_CARHZ</name>
<accession>Q3A8Q5</accession>
<proteinExistence type="inferred from homology"/>